<protein>
    <recommendedName>
        <fullName>3'(2'),5'-bisphosphate nucleotidase 1</fullName>
        <ecNumber evidence="3">3.1.3.7</ecNumber>
    </recommendedName>
    <alternativeName>
        <fullName>3'-phosphoadenosine 5'-phosphate phosphatase</fullName>
        <shortName>PAP phosphatase</shortName>
    </alternativeName>
    <alternativeName>
        <fullName evidence="4">Bisphosphate 3'-nucleotidase 1</fullName>
        <shortName evidence="4">BPntase 1</shortName>
    </alternativeName>
    <alternativeName>
        <fullName evidence="6">Inositol-polyphosphate 1-phosphatase</fullName>
        <ecNumber evidence="3">3.1.3.57</ecNumber>
    </alternativeName>
</protein>
<comment type="function">
    <text evidence="2 3">Phosphatase that converts 3'(2')-phosphoadenosine 5'-phosphate (PAP) to AMP and adenosine 3'-phosphate 5'-phosphosulfate (PAPS) to adenosine 5'-phosphosulfate (APS). Is also able to hydrolyze inositol 1,4-bisphosphate (Ins(1,4)P2) and inositol 1,3,4-trisphosphate (Ins(1,3,4)P3), and is not active on Ins(1)P, Ins(4)P, Ins(3,4)P2, Ins(1,4,5)P3, Ins(1,3,4,5)P4, Ins(1,3,4,5,6)P5 or InsP6 (PubMed:10224133). Probably prevents the toxic accumulation of PAP, a compound which inhibits a variety of proteins, including PAPS-utilizing enzymes such as sulfotransferases, and RNA processing enzymes. Could also play a role in inositol recycling and phosphoinositide metabolism (By similarity).</text>
</comment>
<comment type="catalytic activity">
    <reaction evidence="3">
        <text>adenosine 3',5'-bisphosphate + H2O = AMP + phosphate</text>
        <dbReference type="Rhea" id="RHEA:10040"/>
        <dbReference type="ChEBI" id="CHEBI:15377"/>
        <dbReference type="ChEBI" id="CHEBI:43474"/>
        <dbReference type="ChEBI" id="CHEBI:58343"/>
        <dbReference type="ChEBI" id="CHEBI:456215"/>
        <dbReference type="EC" id="3.1.3.7"/>
    </reaction>
    <physiologicalReaction direction="left-to-right" evidence="6">
        <dbReference type="Rhea" id="RHEA:10041"/>
    </physiologicalReaction>
</comment>
<comment type="catalytic activity">
    <reaction evidence="2">
        <text>adenosine 2',5'-bisphosphate + H2O = AMP + phosphate</text>
        <dbReference type="Rhea" id="RHEA:77643"/>
        <dbReference type="ChEBI" id="CHEBI:15377"/>
        <dbReference type="ChEBI" id="CHEBI:43474"/>
        <dbReference type="ChEBI" id="CHEBI:194156"/>
        <dbReference type="ChEBI" id="CHEBI:456215"/>
        <dbReference type="EC" id="3.1.3.7"/>
    </reaction>
    <physiologicalReaction direction="left-to-right" evidence="2">
        <dbReference type="Rhea" id="RHEA:77644"/>
    </physiologicalReaction>
</comment>
<comment type="catalytic activity">
    <reaction evidence="3">
        <text>3'-phosphoadenylyl sulfate + H2O = adenosine 5'-phosphosulfate + phosphate</text>
        <dbReference type="Rhea" id="RHEA:77639"/>
        <dbReference type="ChEBI" id="CHEBI:15377"/>
        <dbReference type="ChEBI" id="CHEBI:43474"/>
        <dbReference type="ChEBI" id="CHEBI:58243"/>
        <dbReference type="ChEBI" id="CHEBI:58339"/>
        <dbReference type="EC" id="3.1.3.7"/>
    </reaction>
    <physiologicalReaction direction="left-to-right" evidence="6">
        <dbReference type="Rhea" id="RHEA:77640"/>
    </physiologicalReaction>
</comment>
<comment type="catalytic activity">
    <reaction evidence="3">
        <text>1D-myo-inositol 1,4-bisphosphate + H2O = 1D-myo-inositol 4-phosphate + phosphate</text>
        <dbReference type="Rhea" id="RHEA:15553"/>
        <dbReference type="ChEBI" id="CHEBI:15377"/>
        <dbReference type="ChEBI" id="CHEBI:43474"/>
        <dbReference type="ChEBI" id="CHEBI:58282"/>
        <dbReference type="ChEBI" id="CHEBI:58469"/>
        <dbReference type="EC" id="3.1.3.57"/>
    </reaction>
    <physiologicalReaction direction="left-to-right" evidence="6">
        <dbReference type="Rhea" id="RHEA:15554"/>
    </physiologicalReaction>
</comment>
<comment type="catalytic activity">
    <reaction evidence="3">
        <text>1D-myo-inositol 1,3,4-trisphosphate + H2O = 1D-myo-inositol 3,4-bisphosphate + phosphate</text>
        <dbReference type="Rhea" id="RHEA:70319"/>
        <dbReference type="ChEBI" id="CHEBI:15377"/>
        <dbReference type="ChEBI" id="CHEBI:43474"/>
        <dbReference type="ChEBI" id="CHEBI:58414"/>
        <dbReference type="ChEBI" id="CHEBI:83241"/>
    </reaction>
    <physiologicalReaction direction="left-to-right" evidence="6">
        <dbReference type="Rhea" id="RHEA:70320"/>
    </physiologicalReaction>
</comment>
<comment type="cofactor">
    <cofactor evidence="3">
        <name>Mg(2+)</name>
        <dbReference type="ChEBI" id="CHEBI:18420"/>
    </cofactor>
    <text evidence="2">Binds 3 Mg(2+) ions per subunit.</text>
</comment>
<comment type="activity regulation">
    <text evidence="3">Uncompetitively inhibited by Li(+) (IC(50)=157 uM). PAP hydrolysis is competitively inhibited by PAPS (IC(50)=0.7 uM) and by inositol 1,4-bisphosphate (IC(50)=15 uM).</text>
</comment>
<comment type="biophysicochemical properties">
    <kinetics>
        <KM evidence="3">0.52 uM for adenosine 3',5'-bisphosphate (PAP)</KM>
        <KM evidence="3">113 uM for inositol 1,4-bisphosphate</KM>
        <KM evidence="3">61 uM for inositol 1,3,4-trisphosphate</KM>
        <Vmax evidence="3">42.0 umol/min/mg enzyme with adenosine 3',5'-bisphosphate (PAP) as substrate</Vmax>
        <Vmax evidence="3">11.0 umol/min/mg enzyme with inositol 1,4-bisphosphate as substrate</Vmax>
        <Vmax evidence="3">8.0 umol/min/mg enzyme with inositol 1,3,4-trisphosphate as substrate</Vmax>
        <text evidence="5">The different methodology used for determination of the hydrolysis of inositol-1,4-bisphosphate might account for the discrepancy obtained with protein homologs from human and rat, which show much more efficiency with this substrate.</text>
    </kinetics>
    <phDependence>
        <text evidence="3">Optimum pH is approximately 7.5.</text>
    </phDependence>
</comment>
<comment type="tissue specificity">
    <text evidence="3">Widely expressed. Highly expressed in kidney.</text>
</comment>
<comment type="similarity">
    <text evidence="5">Belongs to the inositol monophosphatase superfamily.</text>
</comment>
<reference key="1">
    <citation type="journal article" date="1999" name="J. Biol. Chem.">
        <title>Cloning and characterization of a mammalian lithium-sensitive bisphosphate 3'-nucleotidase inhibited by inositol 1,4-bisphosphate.</title>
        <authorList>
            <person name="Spiegelberg B.D."/>
            <person name="Xiong J.-P."/>
            <person name="Smith J.J."/>
            <person name="Gu R.F."/>
            <person name="York J.D."/>
        </authorList>
    </citation>
    <scope>NUCLEOTIDE SEQUENCE [MRNA]</scope>
    <scope>FUNCTION</scope>
    <scope>CATALYTIC ACTIVITY</scope>
    <scope>COFACTOR</scope>
    <scope>SUBSTRATE SPECIFICITY</scope>
    <scope>ACTIVITY REGULATION</scope>
    <scope>BIOPHYSICOCHEMICAL PROPERTIES</scope>
    <scope>TISSUE SPECIFICITY</scope>
</reference>
<reference key="2">
    <citation type="journal article" date="2005" name="Science">
        <title>The transcriptional landscape of the mammalian genome.</title>
        <authorList>
            <person name="Carninci P."/>
            <person name="Kasukawa T."/>
            <person name="Katayama S."/>
            <person name="Gough J."/>
            <person name="Frith M.C."/>
            <person name="Maeda N."/>
            <person name="Oyama R."/>
            <person name="Ravasi T."/>
            <person name="Lenhard B."/>
            <person name="Wells C."/>
            <person name="Kodzius R."/>
            <person name="Shimokawa K."/>
            <person name="Bajic V.B."/>
            <person name="Brenner S.E."/>
            <person name="Batalov S."/>
            <person name="Forrest A.R."/>
            <person name="Zavolan M."/>
            <person name="Davis M.J."/>
            <person name="Wilming L.G."/>
            <person name="Aidinis V."/>
            <person name="Allen J.E."/>
            <person name="Ambesi-Impiombato A."/>
            <person name="Apweiler R."/>
            <person name="Aturaliya R.N."/>
            <person name="Bailey T.L."/>
            <person name="Bansal M."/>
            <person name="Baxter L."/>
            <person name="Beisel K.W."/>
            <person name="Bersano T."/>
            <person name="Bono H."/>
            <person name="Chalk A.M."/>
            <person name="Chiu K.P."/>
            <person name="Choudhary V."/>
            <person name="Christoffels A."/>
            <person name="Clutterbuck D.R."/>
            <person name="Crowe M.L."/>
            <person name="Dalla E."/>
            <person name="Dalrymple B.P."/>
            <person name="de Bono B."/>
            <person name="Della Gatta G."/>
            <person name="di Bernardo D."/>
            <person name="Down T."/>
            <person name="Engstrom P."/>
            <person name="Fagiolini M."/>
            <person name="Faulkner G."/>
            <person name="Fletcher C.F."/>
            <person name="Fukushima T."/>
            <person name="Furuno M."/>
            <person name="Futaki S."/>
            <person name="Gariboldi M."/>
            <person name="Georgii-Hemming P."/>
            <person name="Gingeras T.R."/>
            <person name="Gojobori T."/>
            <person name="Green R.E."/>
            <person name="Gustincich S."/>
            <person name="Harbers M."/>
            <person name="Hayashi Y."/>
            <person name="Hensch T.K."/>
            <person name="Hirokawa N."/>
            <person name="Hill D."/>
            <person name="Huminiecki L."/>
            <person name="Iacono M."/>
            <person name="Ikeo K."/>
            <person name="Iwama A."/>
            <person name="Ishikawa T."/>
            <person name="Jakt M."/>
            <person name="Kanapin A."/>
            <person name="Katoh M."/>
            <person name="Kawasawa Y."/>
            <person name="Kelso J."/>
            <person name="Kitamura H."/>
            <person name="Kitano H."/>
            <person name="Kollias G."/>
            <person name="Krishnan S.P."/>
            <person name="Kruger A."/>
            <person name="Kummerfeld S.K."/>
            <person name="Kurochkin I.V."/>
            <person name="Lareau L.F."/>
            <person name="Lazarevic D."/>
            <person name="Lipovich L."/>
            <person name="Liu J."/>
            <person name="Liuni S."/>
            <person name="McWilliam S."/>
            <person name="Madan Babu M."/>
            <person name="Madera M."/>
            <person name="Marchionni L."/>
            <person name="Matsuda H."/>
            <person name="Matsuzawa S."/>
            <person name="Miki H."/>
            <person name="Mignone F."/>
            <person name="Miyake S."/>
            <person name="Morris K."/>
            <person name="Mottagui-Tabar S."/>
            <person name="Mulder N."/>
            <person name="Nakano N."/>
            <person name="Nakauchi H."/>
            <person name="Ng P."/>
            <person name="Nilsson R."/>
            <person name="Nishiguchi S."/>
            <person name="Nishikawa S."/>
            <person name="Nori F."/>
            <person name="Ohara O."/>
            <person name="Okazaki Y."/>
            <person name="Orlando V."/>
            <person name="Pang K.C."/>
            <person name="Pavan W.J."/>
            <person name="Pavesi G."/>
            <person name="Pesole G."/>
            <person name="Petrovsky N."/>
            <person name="Piazza S."/>
            <person name="Reed J."/>
            <person name="Reid J.F."/>
            <person name="Ring B.Z."/>
            <person name="Ringwald M."/>
            <person name="Rost B."/>
            <person name="Ruan Y."/>
            <person name="Salzberg S.L."/>
            <person name="Sandelin A."/>
            <person name="Schneider C."/>
            <person name="Schoenbach C."/>
            <person name="Sekiguchi K."/>
            <person name="Semple C.A."/>
            <person name="Seno S."/>
            <person name="Sessa L."/>
            <person name="Sheng Y."/>
            <person name="Shibata Y."/>
            <person name="Shimada H."/>
            <person name="Shimada K."/>
            <person name="Silva D."/>
            <person name="Sinclair B."/>
            <person name="Sperling S."/>
            <person name="Stupka E."/>
            <person name="Sugiura K."/>
            <person name="Sultana R."/>
            <person name="Takenaka Y."/>
            <person name="Taki K."/>
            <person name="Tammoja K."/>
            <person name="Tan S.L."/>
            <person name="Tang S."/>
            <person name="Taylor M.S."/>
            <person name="Tegner J."/>
            <person name="Teichmann S.A."/>
            <person name="Ueda H.R."/>
            <person name="van Nimwegen E."/>
            <person name="Verardo R."/>
            <person name="Wei C.L."/>
            <person name="Yagi K."/>
            <person name="Yamanishi H."/>
            <person name="Zabarovsky E."/>
            <person name="Zhu S."/>
            <person name="Zimmer A."/>
            <person name="Hide W."/>
            <person name="Bult C."/>
            <person name="Grimmond S.M."/>
            <person name="Teasdale R.D."/>
            <person name="Liu E.T."/>
            <person name="Brusic V."/>
            <person name="Quackenbush J."/>
            <person name="Wahlestedt C."/>
            <person name="Mattick J.S."/>
            <person name="Hume D.A."/>
            <person name="Kai C."/>
            <person name="Sasaki D."/>
            <person name="Tomaru Y."/>
            <person name="Fukuda S."/>
            <person name="Kanamori-Katayama M."/>
            <person name="Suzuki M."/>
            <person name="Aoki J."/>
            <person name="Arakawa T."/>
            <person name="Iida J."/>
            <person name="Imamura K."/>
            <person name="Itoh M."/>
            <person name="Kato T."/>
            <person name="Kawaji H."/>
            <person name="Kawagashira N."/>
            <person name="Kawashima T."/>
            <person name="Kojima M."/>
            <person name="Kondo S."/>
            <person name="Konno H."/>
            <person name="Nakano K."/>
            <person name="Ninomiya N."/>
            <person name="Nishio T."/>
            <person name="Okada M."/>
            <person name="Plessy C."/>
            <person name="Shibata K."/>
            <person name="Shiraki T."/>
            <person name="Suzuki S."/>
            <person name="Tagami M."/>
            <person name="Waki K."/>
            <person name="Watahiki A."/>
            <person name="Okamura-Oho Y."/>
            <person name="Suzuki H."/>
            <person name="Kawai J."/>
            <person name="Hayashizaki Y."/>
        </authorList>
    </citation>
    <scope>NUCLEOTIDE SEQUENCE [LARGE SCALE MRNA]</scope>
    <source>
        <strain>C57BL/6J</strain>
        <tissue>Bone marrow</tissue>
        <tissue>Stomach</tissue>
    </source>
</reference>
<reference key="3">
    <citation type="journal article" date="2004" name="Genome Res.">
        <title>The status, quality, and expansion of the NIH full-length cDNA project: the Mammalian Gene Collection (MGC).</title>
        <authorList>
            <consortium name="The MGC Project Team"/>
        </authorList>
    </citation>
    <scope>NUCLEOTIDE SEQUENCE [LARGE SCALE MRNA]</scope>
    <source>
        <tissue>Liver</tissue>
    </source>
</reference>
<reference key="4">
    <citation type="journal article" date="2010" name="Cell">
        <title>A tissue-specific atlas of mouse protein phosphorylation and expression.</title>
        <authorList>
            <person name="Huttlin E.L."/>
            <person name="Jedrychowski M.P."/>
            <person name="Elias J.E."/>
            <person name="Goswami T."/>
            <person name="Rad R."/>
            <person name="Beausoleil S.A."/>
            <person name="Villen J."/>
            <person name="Haas W."/>
            <person name="Sowa M.E."/>
            <person name="Gygi S.P."/>
        </authorList>
    </citation>
    <scope>IDENTIFICATION BY MASS SPECTROMETRY [LARGE SCALE ANALYSIS]</scope>
    <source>
        <tissue>Brain</tissue>
        <tissue>Brown adipose tissue</tissue>
        <tissue>Heart</tissue>
        <tissue>Kidney</tissue>
        <tissue>Liver</tissue>
        <tissue>Lung</tissue>
        <tissue>Pancreas</tissue>
        <tissue>Spleen</tissue>
        <tissue>Testis</tissue>
    </source>
</reference>
<reference key="5">
    <citation type="journal article" date="2013" name="Mol. Cell">
        <title>SIRT5-mediated lysine desuccinylation impacts diverse metabolic pathways.</title>
        <authorList>
            <person name="Park J."/>
            <person name="Chen Y."/>
            <person name="Tishkoff D.X."/>
            <person name="Peng C."/>
            <person name="Tan M."/>
            <person name="Dai L."/>
            <person name="Xie Z."/>
            <person name="Zhang Y."/>
            <person name="Zwaans B.M."/>
            <person name="Skinner M.E."/>
            <person name="Lombard D.B."/>
            <person name="Zhao Y."/>
        </authorList>
    </citation>
    <scope>SUCCINYLATION [LARGE SCALE ANALYSIS] AT LYS-244</scope>
    <scope>IDENTIFICATION BY MASS SPECTROMETRY [LARGE SCALE ANALYSIS]</scope>
    <source>
        <tissue>Liver</tissue>
    </source>
</reference>
<gene>
    <name type="primary">Bpnt1</name>
</gene>
<accession>Q9Z0S1</accession>
<accession>Q3U8Z5</accession>
<accession>Q91XB9</accession>
<accession>Q9D7Y0</accession>
<name>BPNT1_MOUSE</name>
<organism>
    <name type="scientific">Mus musculus</name>
    <name type="common">Mouse</name>
    <dbReference type="NCBI Taxonomy" id="10090"/>
    <lineage>
        <taxon>Eukaryota</taxon>
        <taxon>Metazoa</taxon>
        <taxon>Chordata</taxon>
        <taxon>Craniata</taxon>
        <taxon>Vertebrata</taxon>
        <taxon>Euteleostomi</taxon>
        <taxon>Mammalia</taxon>
        <taxon>Eutheria</taxon>
        <taxon>Euarchontoglires</taxon>
        <taxon>Glires</taxon>
        <taxon>Rodentia</taxon>
        <taxon>Myomorpha</taxon>
        <taxon>Muroidea</taxon>
        <taxon>Muridae</taxon>
        <taxon>Murinae</taxon>
        <taxon>Mus</taxon>
        <taxon>Mus</taxon>
    </lineage>
</organism>
<sequence>MASSHTVLMRLVASAYSIAQKAGTIVRCVIAEGDLGIVQKTSATDLQTKADRLVQMSICSSLARKFPKLTIIGEEDLPPGEVDQELIEDGQWEEILKQPCPSQYSAIKEEDLVVWVDPLDGTKEYTEGLLDNVTVLIGIAYEGKAIAGIINQPYYNYQAGPDAALGRTIWGVLGLGAFGFQLKEAPAGKHIITTTRSHSNQLVTDCISAMNPDTVLRVGGAGNKIIQLIEGKASAYVFASPGCKKWDTCAPEVILHAVGGKLTDIHGNALQYNKEVKHMNSAGVLAALRNYEYYASHVPESVKNALIP</sequence>
<proteinExistence type="evidence at protein level"/>
<evidence type="ECO:0000250" key="1">
    <source>
        <dbReference type="UniProtKB" id="O95861"/>
    </source>
</evidence>
<evidence type="ECO:0000250" key="2">
    <source>
        <dbReference type="UniProtKB" id="Q9Z1N4"/>
    </source>
</evidence>
<evidence type="ECO:0000269" key="3">
    <source>
    </source>
</evidence>
<evidence type="ECO:0000303" key="4">
    <source>
    </source>
</evidence>
<evidence type="ECO:0000305" key="5"/>
<evidence type="ECO:0000305" key="6">
    <source>
    </source>
</evidence>
<evidence type="ECO:0007744" key="7">
    <source>
    </source>
</evidence>
<keyword id="KW-0007">Acetylation</keyword>
<keyword id="KW-0378">Hydrolase</keyword>
<keyword id="KW-0452">Lithium</keyword>
<keyword id="KW-0460">Magnesium</keyword>
<keyword id="KW-0479">Metal-binding</keyword>
<keyword id="KW-0597">Phosphoprotein</keyword>
<keyword id="KW-1185">Reference proteome</keyword>
<dbReference type="EC" id="3.1.3.7" evidence="3"/>
<dbReference type="EC" id="3.1.3.57" evidence="3"/>
<dbReference type="EMBL" id="AF125043">
    <property type="protein sequence ID" value="AAD17330.1"/>
    <property type="molecule type" value="mRNA"/>
</dbReference>
<dbReference type="EMBL" id="AK008714">
    <property type="protein sequence ID" value="BAB25850.1"/>
    <property type="molecule type" value="mRNA"/>
</dbReference>
<dbReference type="EMBL" id="AK151931">
    <property type="protein sequence ID" value="BAE30807.1"/>
    <property type="molecule type" value="mRNA"/>
</dbReference>
<dbReference type="EMBL" id="AK152009">
    <property type="protein sequence ID" value="BAE30872.1"/>
    <property type="molecule type" value="mRNA"/>
</dbReference>
<dbReference type="EMBL" id="BC011036">
    <property type="protein sequence ID" value="AAH11036.1"/>
    <property type="molecule type" value="mRNA"/>
</dbReference>
<dbReference type="CCDS" id="CCDS15597.1"/>
<dbReference type="RefSeq" id="NP_035924.2">
    <property type="nucleotide sequence ID" value="NM_011794.3"/>
</dbReference>
<dbReference type="RefSeq" id="XP_030109781.1">
    <property type="nucleotide sequence ID" value="XM_030253921.2"/>
</dbReference>
<dbReference type="SMR" id="Q9Z0S1"/>
<dbReference type="BioGRID" id="204743">
    <property type="interactions" value="4"/>
</dbReference>
<dbReference type="FunCoup" id="Q9Z0S1">
    <property type="interactions" value="1550"/>
</dbReference>
<dbReference type="STRING" id="10090.ENSMUSP00000147674"/>
<dbReference type="GlyGen" id="Q9Z0S1">
    <property type="glycosylation" value="1 site, 1 O-linked glycan (1 site)"/>
</dbReference>
<dbReference type="iPTMnet" id="Q9Z0S1"/>
<dbReference type="PhosphoSitePlus" id="Q9Z0S1"/>
<dbReference type="SwissPalm" id="Q9Z0S1"/>
<dbReference type="REPRODUCTION-2DPAGE" id="Q9Z0S1"/>
<dbReference type="jPOST" id="Q9Z0S1"/>
<dbReference type="PaxDb" id="10090-ENSMUSP00000027916"/>
<dbReference type="PeptideAtlas" id="Q9Z0S1"/>
<dbReference type="ProteomicsDB" id="281707"/>
<dbReference type="Pumba" id="Q9Z0S1"/>
<dbReference type="Antibodypedia" id="34625">
    <property type="antibodies" value="222 antibodies from 28 providers"/>
</dbReference>
<dbReference type="DNASU" id="23827"/>
<dbReference type="Ensembl" id="ENSMUST00000027916.13">
    <property type="protein sequence ID" value="ENSMUSP00000027916.7"/>
    <property type="gene ID" value="ENSMUSG00000026617.17"/>
</dbReference>
<dbReference type="GeneID" id="23827"/>
<dbReference type="KEGG" id="mmu:23827"/>
<dbReference type="UCSC" id="uc007dzc.1">
    <property type="organism name" value="mouse"/>
</dbReference>
<dbReference type="AGR" id="MGI:1338800"/>
<dbReference type="CTD" id="10380"/>
<dbReference type="MGI" id="MGI:1338800">
    <property type="gene designation" value="Bpnt1"/>
</dbReference>
<dbReference type="VEuPathDB" id="HostDB:ENSMUSG00000026617"/>
<dbReference type="eggNOG" id="KOG3099">
    <property type="taxonomic scope" value="Eukaryota"/>
</dbReference>
<dbReference type="GeneTree" id="ENSGT00940000157359"/>
<dbReference type="InParanoid" id="Q9Z0S1"/>
<dbReference type="OMA" id="QTEADRC"/>
<dbReference type="OrthoDB" id="411145at2759"/>
<dbReference type="PhylomeDB" id="Q9Z0S1"/>
<dbReference type="TreeFam" id="TF314300"/>
<dbReference type="BRENDA" id="3.1.3.7">
    <property type="organism ID" value="3474"/>
</dbReference>
<dbReference type="Reactome" id="R-MMU-156584">
    <property type="pathway name" value="Cytosolic sulfonation of small molecules"/>
</dbReference>
<dbReference type="SABIO-RK" id="Q9Z0S1"/>
<dbReference type="BioGRID-ORCS" id="23827">
    <property type="hits" value="3 hits in 80 CRISPR screens"/>
</dbReference>
<dbReference type="ChiTaRS" id="Bpnt1">
    <property type="organism name" value="mouse"/>
</dbReference>
<dbReference type="PRO" id="PR:Q9Z0S1"/>
<dbReference type="Proteomes" id="UP000000589">
    <property type="component" value="Chromosome 1"/>
</dbReference>
<dbReference type="RNAct" id="Q9Z0S1">
    <property type="molecule type" value="protein"/>
</dbReference>
<dbReference type="Bgee" id="ENSMUSG00000026617">
    <property type="expression patterns" value="Expressed in small intestine Peyer's patch and 248 other cell types or tissues"/>
</dbReference>
<dbReference type="ExpressionAtlas" id="Q9Z0S1">
    <property type="expression patterns" value="baseline and differential"/>
</dbReference>
<dbReference type="GO" id="GO:0008441">
    <property type="term" value="F:3'(2'),5'-bisphosphate nucleotidase activity"/>
    <property type="evidence" value="ECO:0000314"/>
    <property type="project" value="MGI"/>
</dbReference>
<dbReference type="GO" id="GO:0004441">
    <property type="term" value="F:inositol-1,4-bisphosphate 1-phosphatase activity"/>
    <property type="evidence" value="ECO:0007669"/>
    <property type="project" value="RHEA"/>
</dbReference>
<dbReference type="GO" id="GO:0046872">
    <property type="term" value="F:metal ion binding"/>
    <property type="evidence" value="ECO:0007669"/>
    <property type="project" value="UniProtKB-KW"/>
</dbReference>
<dbReference type="GO" id="GO:0046854">
    <property type="term" value="P:phosphatidylinositol phosphate biosynthetic process"/>
    <property type="evidence" value="ECO:0007669"/>
    <property type="project" value="InterPro"/>
</dbReference>
<dbReference type="CDD" id="cd01640">
    <property type="entry name" value="IPPase"/>
    <property type="match status" value="1"/>
</dbReference>
<dbReference type="FunFam" id="3.30.540.10:FF:000011">
    <property type="entry name" value="Bisphosphate nucleotidase 1"/>
    <property type="match status" value="1"/>
</dbReference>
<dbReference type="FunFam" id="3.40.190.80:FF:000006">
    <property type="entry name" value="Bisphosphate nucleotidase 1"/>
    <property type="match status" value="1"/>
</dbReference>
<dbReference type="Gene3D" id="3.40.190.80">
    <property type="match status" value="1"/>
</dbReference>
<dbReference type="Gene3D" id="3.30.540.10">
    <property type="entry name" value="Fructose-1,6-Bisphosphatase, subunit A, domain 1"/>
    <property type="match status" value="1"/>
</dbReference>
<dbReference type="InterPro" id="IPR050725">
    <property type="entry name" value="CysQ/Inositol_MonoPase"/>
</dbReference>
<dbReference type="InterPro" id="IPR020583">
    <property type="entry name" value="Inositol_monoP_metal-BS"/>
</dbReference>
<dbReference type="InterPro" id="IPR000760">
    <property type="entry name" value="Inositol_monophosphatase-like"/>
</dbReference>
<dbReference type="InterPro" id="IPR020550">
    <property type="entry name" value="Inositol_monophosphatase_CS"/>
</dbReference>
<dbReference type="PANTHER" id="PTHR43028">
    <property type="entry name" value="3'(2'),5'-BISPHOSPHATE NUCLEOTIDASE 1"/>
    <property type="match status" value="1"/>
</dbReference>
<dbReference type="PANTHER" id="PTHR43028:SF5">
    <property type="entry name" value="3'(2'),5'-BISPHOSPHATE NUCLEOTIDASE 1"/>
    <property type="match status" value="1"/>
</dbReference>
<dbReference type="Pfam" id="PF00459">
    <property type="entry name" value="Inositol_P"/>
    <property type="match status" value="1"/>
</dbReference>
<dbReference type="SUPFAM" id="SSF56655">
    <property type="entry name" value="Carbohydrate phosphatase"/>
    <property type="match status" value="1"/>
</dbReference>
<dbReference type="PROSITE" id="PS00629">
    <property type="entry name" value="IMP_1"/>
    <property type="match status" value="1"/>
</dbReference>
<dbReference type="PROSITE" id="PS00630">
    <property type="entry name" value="IMP_2"/>
    <property type="match status" value="1"/>
</dbReference>
<feature type="initiator methionine" description="Removed" evidence="1">
    <location>
        <position position="1"/>
    </location>
</feature>
<feature type="chain" id="PRO_0000142528" description="3'(2'),5'-bisphosphate nucleotidase 1">
    <location>
        <begin position="2"/>
        <end position="308"/>
    </location>
</feature>
<feature type="active site" description="Proton acceptor" evidence="2">
    <location>
        <position position="51"/>
    </location>
</feature>
<feature type="active site" description="Proton acceptor" evidence="2">
    <location>
        <position position="122"/>
    </location>
</feature>
<feature type="binding site" evidence="2">
    <location>
        <position position="74"/>
    </location>
    <ligand>
        <name>Mg(2+)</name>
        <dbReference type="ChEBI" id="CHEBI:18420"/>
        <label>1</label>
    </ligand>
</feature>
<feature type="binding site" evidence="2">
    <location>
        <position position="74"/>
    </location>
    <ligand>
        <name>Mg(2+)</name>
        <dbReference type="ChEBI" id="CHEBI:18420"/>
        <label>3</label>
    </ligand>
</feature>
<feature type="binding site" evidence="2">
    <location>
        <position position="117"/>
    </location>
    <ligand>
        <name>Mg(2+)</name>
        <dbReference type="ChEBI" id="CHEBI:18420"/>
        <label>1</label>
    </ligand>
</feature>
<feature type="binding site" evidence="2">
    <location>
        <position position="117"/>
    </location>
    <ligand>
        <name>Mg(2+)</name>
        <dbReference type="ChEBI" id="CHEBI:18420"/>
        <label>2</label>
    </ligand>
</feature>
<feature type="binding site" evidence="2">
    <location>
        <position position="119"/>
    </location>
    <ligand>
        <name>Mg(2+)</name>
        <dbReference type="ChEBI" id="CHEBI:18420"/>
        <label>1</label>
    </ligand>
</feature>
<feature type="binding site" evidence="2">
    <location>
        <position position="120"/>
    </location>
    <ligand>
        <name>Mg(2+)</name>
        <dbReference type="ChEBI" id="CHEBI:18420"/>
        <label>2</label>
    </ligand>
</feature>
<feature type="binding site" evidence="2">
    <location>
        <position position="195"/>
    </location>
    <ligand>
        <name>AMP</name>
        <dbReference type="ChEBI" id="CHEBI:456215"/>
    </ligand>
</feature>
<feature type="binding site" evidence="2">
    <location>
        <position position="198"/>
    </location>
    <ligand>
        <name>AMP</name>
        <dbReference type="ChEBI" id="CHEBI:456215"/>
    </ligand>
</feature>
<feature type="binding site" evidence="2">
    <location>
        <position position="220"/>
    </location>
    <ligand>
        <name>AMP</name>
        <dbReference type="ChEBI" id="CHEBI:456215"/>
    </ligand>
</feature>
<feature type="binding site" evidence="2">
    <location>
        <position position="224"/>
    </location>
    <ligand>
        <name>AMP</name>
        <dbReference type="ChEBI" id="CHEBI:456215"/>
    </ligand>
</feature>
<feature type="binding site" evidence="2">
    <location>
        <position position="247"/>
    </location>
    <ligand>
        <name>Mg(2+)</name>
        <dbReference type="ChEBI" id="CHEBI:18420"/>
        <label>2</label>
    </ligand>
</feature>
<feature type="modified residue" description="N-acetylalanine" evidence="1">
    <location>
        <position position="2"/>
    </location>
</feature>
<feature type="modified residue" description="Phosphothreonine" evidence="1">
    <location>
        <position position="122"/>
    </location>
</feature>
<feature type="modified residue" description="Phosphoserine" evidence="1">
    <location>
        <position position="240"/>
    </location>
</feature>
<feature type="modified residue" description="N6-succinyllysine" evidence="7">
    <location>
        <position position="244"/>
    </location>
</feature>
<feature type="sequence conflict" description="In Ref. 3; AAH11036." evidence="5" ref="3">
    <original>A</original>
    <variation>V</variation>
    <location>
        <position position="164"/>
    </location>
</feature>
<feature type="sequence conflict" description="In Ref. 3; AAH11036." evidence="5" ref="3">
    <original>H</original>
    <variation>R</variation>
    <location>
        <position position="190"/>
    </location>
</feature>
<feature type="sequence conflict" description="In Ref. 1; AAD17330." evidence="5" ref="1">
    <original>V</original>
    <variation>A</variation>
    <location>
        <position position="276"/>
    </location>
</feature>